<comment type="function">
    <text evidence="1">Proline-directed serine/threonine-protein kinase involved in a signal transduction pathway that is activated by changes in the osmolarity of the extracellular environment. Controls osmotic regulation of transcription of target genes (By similarity).</text>
</comment>
<comment type="catalytic activity">
    <reaction evidence="2">
        <text>L-seryl-[protein] + ATP = O-phospho-L-seryl-[protein] + ADP + H(+)</text>
        <dbReference type="Rhea" id="RHEA:17989"/>
        <dbReference type="Rhea" id="RHEA-COMP:9863"/>
        <dbReference type="Rhea" id="RHEA-COMP:11604"/>
        <dbReference type="ChEBI" id="CHEBI:15378"/>
        <dbReference type="ChEBI" id="CHEBI:29999"/>
        <dbReference type="ChEBI" id="CHEBI:30616"/>
        <dbReference type="ChEBI" id="CHEBI:83421"/>
        <dbReference type="ChEBI" id="CHEBI:456216"/>
        <dbReference type="EC" id="2.7.11.24"/>
    </reaction>
    <physiologicalReaction direction="left-to-right" evidence="2">
        <dbReference type="Rhea" id="RHEA:17990"/>
    </physiologicalReaction>
</comment>
<comment type="catalytic activity">
    <reaction evidence="2">
        <text>L-threonyl-[protein] + ATP = O-phospho-L-threonyl-[protein] + ADP + H(+)</text>
        <dbReference type="Rhea" id="RHEA:46608"/>
        <dbReference type="Rhea" id="RHEA-COMP:11060"/>
        <dbReference type="Rhea" id="RHEA-COMP:11605"/>
        <dbReference type="ChEBI" id="CHEBI:15378"/>
        <dbReference type="ChEBI" id="CHEBI:30013"/>
        <dbReference type="ChEBI" id="CHEBI:30616"/>
        <dbReference type="ChEBI" id="CHEBI:61977"/>
        <dbReference type="ChEBI" id="CHEBI:456216"/>
        <dbReference type="EC" id="2.7.11.24"/>
    </reaction>
    <physiologicalReaction direction="left-to-right" evidence="2">
        <dbReference type="Rhea" id="RHEA:46609"/>
    </physiologicalReaction>
</comment>
<comment type="cofactor">
    <cofactor evidence="3">
        <name>Mg(2+)</name>
        <dbReference type="ChEBI" id="CHEBI:18420"/>
    </cofactor>
</comment>
<comment type="activity regulation">
    <text evidence="1">Activated by tyrosine and threonine phosphorylation.</text>
</comment>
<comment type="subcellular location">
    <subcellularLocation>
        <location evidence="1">Cytoplasm</location>
    </subcellularLocation>
    <subcellularLocation>
        <location evidence="1">Nucleus</location>
    </subcellularLocation>
</comment>
<comment type="domain">
    <text>The TXY motif contains the threonine and tyrosine residues whose phosphorylation activates the MAP kinases.</text>
</comment>
<comment type="PTM">
    <text evidence="1">Dually phosphorylated on Thr-171 and Tyr-173, which activates the enzyme.</text>
</comment>
<comment type="similarity">
    <text evidence="4">Belongs to the protein kinase superfamily. Ser/Thr protein kinase family. MAP kinase subfamily. HOG1 sub-subfamily.</text>
</comment>
<organism>
    <name type="scientific">Chaetomium globosum (strain ATCC 6205 / CBS 148.51 / DSM 1962 / NBRC 6347 / NRRL 1970)</name>
    <name type="common">Soil fungus</name>
    <dbReference type="NCBI Taxonomy" id="306901"/>
    <lineage>
        <taxon>Eukaryota</taxon>
        <taxon>Fungi</taxon>
        <taxon>Dikarya</taxon>
        <taxon>Ascomycota</taxon>
        <taxon>Pezizomycotina</taxon>
        <taxon>Sordariomycetes</taxon>
        <taxon>Sordariomycetidae</taxon>
        <taxon>Sordariales</taxon>
        <taxon>Chaetomiaceae</taxon>
        <taxon>Chaetomium</taxon>
    </lineage>
</organism>
<feature type="chain" id="PRO_0000289680" description="Mitogen-activated protein kinase HOG1">
    <location>
        <begin position="1"/>
        <end position="360"/>
    </location>
</feature>
<feature type="domain" description="Protein kinase" evidence="4">
    <location>
        <begin position="20"/>
        <end position="299"/>
    </location>
</feature>
<feature type="short sequence motif" description="TXY">
    <location>
        <begin position="171"/>
        <end position="173"/>
    </location>
</feature>
<feature type="active site" description="Proton acceptor" evidence="4 5">
    <location>
        <position position="141"/>
    </location>
</feature>
<feature type="binding site" evidence="4">
    <location>
        <begin position="26"/>
        <end position="34"/>
    </location>
    <ligand>
        <name>ATP</name>
        <dbReference type="ChEBI" id="CHEBI:30616"/>
    </ligand>
</feature>
<feature type="binding site" evidence="4">
    <location>
        <position position="49"/>
    </location>
    <ligand>
        <name>ATP</name>
        <dbReference type="ChEBI" id="CHEBI:30616"/>
    </ligand>
</feature>
<feature type="modified residue" description="Phosphothreonine" evidence="1">
    <location>
        <position position="171"/>
    </location>
</feature>
<feature type="modified residue" description="Phosphotyrosine" evidence="1">
    <location>
        <position position="173"/>
    </location>
</feature>
<keyword id="KW-0010">Activator</keyword>
<keyword id="KW-0067">ATP-binding</keyword>
<keyword id="KW-0963">Cytoplasm</keyword>
<keyword id="KW-0418">Kinase</keyword>
<keyword id="KW-0547">Nucleotide-binding</keyword>
<keyword id="KW-0539">Nucleus</keyword>
<keyword id="KW-0597">Phosphoprotein</keyword>
<keyword id="KW-1185">Reference proteome</keyword>
<keyword id="KW-0723">Serine/threonine-protein kinase</keyword>
<keyword id="KW-0804">Transcription</keyword>
<keyword id="KW-0805">Transcription regulation</keyword>
<keyword id="KW-0808">Transferase</keyword>
<name>HOG1_CHAGB</name>
<proteinExistence type="inferred from homology"/>
<gene>
    <name type="primary">HOG1</name>
    <name type="ORF">CHGG_03814</name>
</gene>
<evidence type="ECO:0000250" key="1"/>
<evidence type="ECO:0000250" key="2">
    <source>
        <dbReference type="UniProtKB" id="P32485"/>
    </source>
</evidence>
<evidence type="ECO:0000250" key="3">
    <source>
        <dbReference type="UniProtKB" id="Q16539"/>
    </source>
</evidence>
<evidence type="ECO:0000255" key="4">
    <source>
        <dbReference type="PROSITE-ProRule" id="PRU00159"/>
    </source>
</evidence>
<evidence type="ECO:0000255" key="5">
    <source>
        <dbReference type="PROSITE-ProRule" id="PRU10027"/>
    </source>
</evidence>
<reference key="1">
    <citation type="journal article" date="2015" name="Genome Announc.">
        <title>Draft genome sequence of the cellulolytic fungus Chaetomium globosum.</title>
        <authorList>
            <person name="Cuomo C.A."/>
            <person name="Untereiner W.A."/>
            <person name="Ma L.-J."/>
            <person name="Grabherr M."/>
            <person name="Birren B.W."/>
        </authorList>
    </citation>
    <scope>NUCLEOTIDE SEQUENCE [LARGE SCALE GENOMIC DNA]</scope>
    <source>
        <strain>ATCC 6205 / CBS 148.51 / DSM 1962 / NBRC 6347 / NRRL 1970</strain>
    </source>
</reference>
<dbReference type="EC" id="2.7.11.24" evidence="2"/>
<dbReference type="EMBL" id="CH408032">
    <property type="protein sequence ID" value="EAQ87195.1"/>
    <property type="molecule type" value="Genomic_DNA"/>
</dbReference>
<dbReference type="RefSeq" id="XP_001223028.1">
    <property type="nucleotide sequence ID" value="XM_001223027.1"/>
</dbReference>
<dbReference type="SMR" id="Q2H332"/>
<dbReference type="FunCoup" id="Q2H332">
    <property type="interactions" value="508"/>
</dbReference>
<dbReference type="STRING" id="306901.Q2H332"/>
<dbReference type="GeneID" id="4392981"/>
<dbReference type="VEuPathDB" id="FungiDB:CHGG_03814"/>
<dbReference type="eggNOG" id="KOG0660">
    <property type="taxonomic scope" value="Eukaryota"/>
</dbReference>
<dbReference type="HOGENOM" id="CLU_000288_181_1_1"/>
<dbReference type="InParanoid" id="Q2H332"/>
<dbReference type="OMA" id="NRYTDLN"/>
<dbReference type="OrthoDB" id="192887at2759"/>
<dbReference type="Proteomes" id="UP000001056">
    <property type="component" value="Unassembled WGS sequence"/>
</dbReference>
<dbReference type="GO" id="GO:0005737">
    <property type="term" value="C:cytoplasm"/>
    <property type="evidence" value="ECO:0007669"/>
    <property type="project" value="UniProtKB-SubCell"/>
</dbReference>
<dbReference type="GO" id="GO:0005634">
    <property type="term" value="C:nucleus"/>
    <property type="evidence" value="ECO:0007669"/>
    <property type="project" value="UniProtKB-SubCell"/>
</dbReference>
<dbReference type="GO" id="GO:0005524">
    <property type="term" value="F:ATP binding"/>
    <property type="evidence" value="ECO:0007669"/>
    <property type="project" value="UniProtKB-KW"/>
</dbReference>
<dbReference type="GO" id="GO:0004707">
    <property type="term" value="F:MAP kinase activity"/>
    <property type="evidence" value="ECO:0007669"/>
    <property type="project" value="UniProtKB-EC"/>
</dbReference>
<dbReference type="GO" id="GO:0106310">
    <property type="term" value="F:protein serine kinase activity"/>
    <property type="evidence" value="ECO:0007669"/>
    <property type="project" value="RHEA"/>
</dbReference>
<dbReference type="GO" id="GO:0051403">
    <property type="term" value="P:stress-activated MAPK cascade"/>
    <property type="evidence" value="ECO:0007669"/>
    <property type="project" value="InterPro"/>
</dbReference>
<dbReference type="CDD" id="cd07856">
    <property type="entry name" value="STKc_Sty1_Hog1"/>
    <property type="match status" value="1"/>
</dbReference>
<dbReference type="FunFam" id="1.10.510.10:FF:000049">
    <property type="entry name" value="Mitogen-activated protein kinase"/>
    <property type="match status" value="1"/>
</dbReference>
<dbReference type="FunFam" id="3.30.200.20:FF:000050">
    <property type="entry name" value="Mitogen-activated protein kinase"/>
    <property type="match status" value="1"/>
</dbReference>
<dbReference type="Gene3D" id="3.30.200.20">
    <property type="entry name" value="Phosphorylase Kinase, domain 1"/>
    <property type="match status" value="1"/>
</dbReference>
<dbReference type="Gene3D" id="1.10.510.10">
    <property type="entry name" value="Transferase(Phosphotransferase) domain 1"/>
    <property type="match status" value="1"/>
</dbReference>
<dbReference type="InterPro" id="IPR011009">
    <property type="entry name" value="Kinase-like_dom_sf"/>
</dbReference>
<dbReference type="InterPro" id="IPR050117">
    <property type="entry name" value="MAP_kinase"/>
</dbReference>
<dbReference type="InterPro" id="IPR003527">
    <property type="entry name" value="MAP_kinase_CS"/>
</dbReference>
<dbReference type="InterPro" id="IPR008352">
    <property type="entry name" value="MAPK_p38-like"/>
</dbReference>
<dbReference type="InterPro" id="IPR038783">
    <property type="entry name" value="MAPK_Sty1/Hog1"/>
</dbReference>
<dbReference type="InterPro" id="IPR000719">
    <property type="entry name" value="Prot_kinase_dom"/>
</dbReference>
<dbReference type="InterPro" id="IPR017441">
    <property type="entry name" value="Protein_kinase_ATP_BS"/>
</dbReference>
<dbReference type="InterPro" id="IPR008271">
    <property type="entry name" value="Ser/Thr_kinase_AS"/>
</dbReference>
<dbReference type="PANTHER" id="PTHR24055">
    <property type="entry name" value="MITOGEN-ACTIVATED PROTEIN KINASE"/>
    <property type="match status" value="1"/>
</dbReference>
<dbReference type="Pfam" id="PF00069">
    <property type="entry name" value="Pkinase"/>
    <property type="match status" value="1"/>
</dbReference>
<dbReference type="PRINTS" id="PR01773">
    <property type="entry name" value="P38MAPKINASE"/>
</dbReference>
<dbReference type="SMART" id="SM00220">
    <property type="entry name" value="S_TKc"/>
    <property type="match status" value="1"/>
</dbReference>
<dbReference type="SUPFAM" id="SSF56112">
    <property type="entry name" value="Protein kinase-like (PK-like)"/>
    <property type="match status" value="1"/>
</dbReference>
<dbReference type="PROSITE" id="PS01351">
    <property type="entry name" value="MAPK"/>
    <property type="match status" value="1"/>
</dbReference>
<dbReference type="PROSITE" id="PS00107">
    <property type="entry name" value="PROTEIN_KINASE_ATP"/>
    <property type="match status" value="1"/>
</dbReference>
<dbReference type="PROSITE" id="PS50011">
    <property type="entry name" value="PROTEIN_KINASE_DOM"/>
    <property type="match status" value="1"/>
</dbReference>
<dbReference type="PROSITE" id="PS00108">
    <property type="entry name" value="PROTEIN_KINASE_ST"/>
    <property type="match status" value="1"/>
</dbReference>
<sequence length="360" mass="41388">MAEFVRAQIFGTTFEITSRYSDLQPVGMGAFGLVCSAKDQLTSQNVAIKKIMKPFSTPVLAKRTYRELKLLKHLKHENVISLSDIFISPLEDIYFVTELLGTDLHRLLTSRPLEKQFIQYFLYQIMRGLKYVHSAGVVHRDLKPSNILVNENCDLKICDFGLARIQDPQMTGYVSTRYYRAPEIMLTWQKYDVEVDIWSAGCIFAEMLEGKPLFPGKDHVNQFSIITELLGTPPDDVINTIASENTLRFVKSLPMRERQPLKNKFKNADPTAIDLLERMLVFDPKKRITATEALAHEYLAPYHDPTDEPTAELKFDWSFNDADLPVDTWKIMMYSEILDYHNVEAASVGEMENQQQYLAQ</sequence>
<accession>Q2H332</accession>
<protein>
    <recommendedName>
        <fullName>Mitogen-activated protein kinase HOG1</fullName>
        <shortName>MAP kinase HOG1</shortName>
        <ecNumber evidence="2">2.7.11.24</ecNumber>
    </recommendedName>
</protein>